<reference key="1">
    <citation type="journal article" date="2009" name="J. Mol. Catal., B Enzym.">
        <title>Cyclohexane-1,2-dione hydrolase: A new tool to degrade alicyclic compounds.</title>
        <authorList>
            <person name="Fraas S."/>
            <person name="Steinbach A.K."/>
            <person name="Tabbert A."/>
            <person name="Harder J."/>
            <person name="Ermler U."/>
            <person name="Tittmann K."/>
            <person name="Meyer A."/>
            <person name="Kroneck P.M.H."/>
        </authorList>
    </citation>
    <scope>FUNCTION</scope>
    <scope>CATALYTIC ACTIVITY</scope>
    <scope>COFACTOR</scope>
    <scope>SUBUNIT</scope>
    <scope>BIOPHYSICOCHEMICAL PROPERTIES</scope>
    <source>
        <strain>22Lin</strain>
    </source>
</reference>
<reference key="2">
    <citation type="submission" date="2007-04" db="PDB data bank">
        <title>The crystal structure of FAD and ThDP dependent cyclohexane-1,2-dione hydrolase (CDH) from Azoarcus SP. strain 22Lin.</title>
        <authorList>
            <person name="Steinbach A.K."/>
            <person name="Fraas S."/>
            <person name="Harder J."/>
            <person name="Warkentin E."/>
            <person name="Kroneck P.M.H."/>
            <person name="Ermler U."/>
        </authorList>
    </citation>
    <scope>X-RAY CRYSTALLOGRAPHY (1.2 ANGSTROMS) IN COMPLEX WITH MAGNESIUM; FAD; TPP AND SUBSTRATE ANALOG</scope>
</reference>
<sequence>MAIKRGADLIVEALEEYGTEQVVGFIGHTSHFVADAFSKSHLGKRVINPATELGGAWMVNGYNYVKDRSAAVGAWHCVGNLLLHAAMQEARTGRIPAVHIGLNSDGRLAGRSEAAQQVPWQSFTPIARSTQRVERLDKVGEAIHEAFRVAEGHPAGPAYVDIPFDLTADQIDDKALVPRGATRAKSVLHAPNEDVREAAAQLVAAKNPVILAGGGVARSGGSEALLKLAEMVGVPVVTTSTGAGVFPETHALAMGSAGFCGWKSANDMMAAADFVLVLGSRLSDWGIAQGYITKMPKFVHVDTDPAVLGTFYFPLLSVVADAKTFMEQLIEVLPGTSGFKAVRYQERENFRQATEFRAAWDGWVREQESGDGMPASMFRAMAEVRKVQRPEDIIVTDIGNHTLPMFGGAILQRPRRLVTSMAEGILGCGFPMALGAQLAEPNSRVFLGTGDGALYYHFNEFRVAVEHKLPVITMVFTNESYGANWTLMNHQFGQNNWTEFMNPDWVGIAKAFGAYGESVRETGDIAGALQRAIDSGKPALIEIPVSKTQGLASDPVGGVGPNLLLKGREIPVDTGGSMYPGENLLHLKS</sequence>
<accession>P0CH62</accession>
<comment type="function">
    <text evidence="2">Catalyzes the ring-opening cleavage of the alicyclic alcohol cyclohexane-1,2-dione.</text>
</comment>
<comment type="catalytic activity">
    <reaction evidence="2">
        <text>cyclohexan-1,2-dione + H2O = 6-oxohexanoate + H(+)</text>
        <dbReference type="Rhea" id="RHEA:26514"/>
        <dbReference type="ChEBI" id="CHEBI:15377"/>
        <dbReference type="ChEBI" id="CHEBI:15378"/>
        <dbReference type="ChEBI" id="CHEBI:18322"/>
        <dbReference type="ChEBI" id="CHEBI:41674"/>
        <dbReference type="EC" id="3.7.1.11"/>
    </reaction>
</comment>
<comment type="cofactor">
    <cofactor evidence="2">
        <name>Mg(2+)</name>
        <dbReference type="ChEBI" id="CHEBI:18420"/>
    </cofactor>
    <text evidence="2">Binds 1 Mg(2+) ion per subunit.</text>
</comment>
<comment type="cofactor">
    <cofactor evidence="2">
        <name>thiamine diphosphate</name>
        <dbReference type="ChEBI" id="CHEBI:58937"/>
    </cofactor>
    <text evidence="2">Binds 1 thiamine pyrophosphate per subunit.</text>
</comment>
<comment type="cofactor">
    <cofactor evidence="2">
        <name>FAD</name>
        <dbReference type="ChEBI" id="CHEBI:57692"/>
    </cofactor>
    <text evidence="2">Binds 1 FAD per subunit.</text>
</comment>
<comment type="biophysicochemical properties">
    <kinetics>
        <KM evidence="2">12.3 uM for cyclohexane-1,2-dione</KM>
    </kinetics>
    <phDependence>
        <text evidence="2">Optimum pH is 8.</text>
    </phDependence>
</comment>
<comment type="subunit">
    <text evidence="2 3">Homodimer.</text>
</comment>
<comment type="similarity">
    <text evidence="4">Belongs to the TPP enzyme family.</text>
</comment>
<feature type="chain" id="PRO_0000397839" description="Cyclohexane-1,2-dione hydrolase">
    <location>
        <begin position="1"/>
        <end position="589"/>
    </location>
</feature>
<feature type="region of interest" description="Thiamine pyrophosphate binding" evidence="1">
    <location>
        <begin position="400"/>
        <end position="480"/>
    </location>
</feature>
<feature type="binding site" evidence="1">
    <location>
        <position position="52"/>
    </location>
    <ligand>
        <name>thiamine diphosphate</name>
        <dbReference type="ChEBI" id="CHEBI:58937"/>
    </ligand>
</feature>
<feature type="binding site" evidence="1">
    <location>
        <position position="451"/>
    </location>
    <ligand>
        <name>Mg(2+)</name>
        <dbReference type="ChEBI" id="CHEBI:18420"/>
    </ligand>
</feature>
<feature type="binding site" evidence="1">
    <location>
        <position position="478"/>
    </location>
    <ligand>
        <name>Mg(2+)</name>
        <dbReference type="ChEBI" id="CHEBI:18420"/>
    </ligand>
</feature>
<feature type="strand" evidence="5">
    <location>
        <begin position="3"/>
        <end position="5"/>
    </location>
</feature>
<feature type="helix" evidence="5">
    <location>
        <begin position="6"/>
        <end position="16"/>
    </location>
</feature>
<feature type="strand" evidence="5">
    <location>
        <begin position="21"/>
        <end position="25"/>
    </location>
</feature>
<feature type="helix" evidence="5">
    <location>
        <begin position="28"/>
        <end position="30"/>
    </location>
</feature>
<feature type="helix" evidence="5">
    <location>
        <begin position="31"/>
        <end position="38"/>
    </location>
</feature>
<feature type="helix" evidence="5">
    <location>
        <begin position="41"/>
        <end position="44"/>
    </location>
</feature>
<feature type="strand" evidence="5">
    <location>
        <begin position="45"/>
        <end position="47"/>
    </location>
</feature>
<feature type="helix" evidence="5">
    <location>
        <begin position="52"/>
        <end position="66"/>
    </location>
</feature>
<feature type="strand" evidence="5">
    <location>
        <begin position="71"/>
        <end position="76"/>
    </location>
</feature>
<feature type="helix" evidence="5">
    <location>
        <begin position="77"/>
        <end position="82"/>
    </location>
</feature>
<feature type="helix" evidence="5">
    <location>
        <begin position="84"/>
        <end position="92"/>
    </location>
</feature>
<feature type="strand" evidence="5">
    <location>
        <begin position="97"/>
        <end position="104"/>
    </location>
</feature>
<feature type="helix" evidence="5">
    <location>
        <begin position="106"/>
        <end position="108"/>
    </location>
</feature>
<feature type="helix" evidence="5">
    <location>
        <begin position="120"/>
        <end position="123"/>
    </location>
</feature>
<feature type="turn" evidence="5">
    <location>
        <begin position="124"/>
        <end position="126"/>
    </location>
</feature>
<feature type="strand" evidence="5">
    <location>
        <begin position="127"/>
        <end position="132"/>
    </location>
</feature>
<feature type="helix" evidence="5">
    <location>
        <begin position="136"/>
        <end position="138"/>
    </location>
</feature>
<feature type="helix" evidence="5">
    <location>
        <begin position="139"/>
        <end position="150"/>
    </location>
</feature>
<feature type="strand" evidence="5">
    <location>
        <begin position="152"/>
        <end position="154"/>
    </location>
</feature>
<feature type="strand" evidence="5">
    <location>
        <begin position="157"/>
        <end position="163"/>
    </location>
</feature>
<feature type="helix" evidence="5">
    <location>
        <begin position="165"/>
        <end position="168"/>
    </location>
</feature>
<feature type="strand" evidence="5">
    <location>
        <begin position="170"/>
        <end position="172"/>
    </location>
</feature>
<feature type="turn" evidence="5">
    <location>
        <begin position="174"/>
        <end position="176"/>
    </location>
</feature>
<feature type="helix" evidence="5">
    <location>
        <begin position="192"/>
        <end position="204"/>
    </location>
</feature>
<feature type="strand" evidence="5">
    <location>
        <begin position="206"/>
        <end position="212"/>
    </location>
</feature>
<feature type="helix" evidence="5">
    <location>
        <begin position="214"/>
        <end position="219"/>
    </location>
</feature>
<feature type="helix" evidence="5">
    <location>
        <begin position="222"/>
        <end position="232"/>
    </location>
</feature>
<feature type="strand" evidence="5">
    <location>
        <begin position="236"/>
        <end position="238"/>
    </location>
</feature>
<feature type="turn" evidence="5">
    <location>
        <begin position="240"/>
        <end position="244"/>
    </location>
</feature>
<feature type="strand" evidence="5">
    <location>
        <begin position="253"/>
        <end position="256"/>
    </location>
</feature>
<feature type="helix" evidence="5">
    <location>
        <begin position="263"/>
        <end position="271"/>
    </location>
</feature>
<feature type="strand" evidence="5">
    <location>
        <begin position="273"/>
        <end position="279"/>
    </location>
</feature>
<feature type="turn" evidence="5">
    <location>
        <begin position="284"/>
        <end position="292"/>
    </location>
</feature>
<feature type="strand" evidence="5">
    <location>
        <begin position="297"/>
        <end position="303"/>
    </location>
</feature>
<feature type="helix" evidence="5">
    <location>
        <begin position="305"/>
        <end position="307"/>
    </location>
</feature>
<feature type="strand" evidence="5">
    <location>
        <begin position="310"/>
        <end position="312"/>
    </location>
</feature>
<feature type="strand" evidence="5">
    <location>
        <begin position="315"/>
        <end position="319"/>
    </location>
</feature>
<feature type="helix" evidence="5">
    <location>
        <begin position="322"/>
        <end position="332"/>
    </location>
</feature>
<feature type="helix" evidence="5">
    <location>
        <begin position="333"/>
        <end position="335"/>
    </location>
</feature>
<feature type="helix" evidence="5">
    <location>
        <begin position="344"/>
        <end position="346"/>
    </location>
</feature>
<feature type="helix" evidence="5">
    <location>
        <begin position="350"/>
        <end position="368"/>
    </location>
</feature>
<feature type="strand" evidence="5">
    <location>
        <begin position="372"/>
        <end position="375"/>
    </location>
</feature>
<feature type="helix" evidence="5">
    <location>
        <begin position="377"/>
        <end position="386"/>
    </location>
</feature>
<feature type="strand" evidence="5">
    <location>
        <begin position="393"/>
        <end position="396"/>
    </location>
</feature>
<feature type="helix" evidence="5">
    <location>
        <begin position="402"/>
        <end position="408"/>
    </location>
</feature>
<feature type="strand" evidence="5">
    <location>
        <begin position="417"/>
        <end position="419"/>
    </location>
</feature>
<feature type="turn" evidence="5">
    <location>
        <begin position="421"/>
        <end position="423"/>
    </location>
</feature>
<feature type="helix" evidence="5">
    <location>
        <begin position="429"/>
        <end position="439"/>
    </location>
</feature>
<feature type="strand" evidence="5">
    <location>
        <begin position="445"/>
        <end position="450"/>
    </location>
</feature>
<feature type="helix" evidence="5">
    <location>
        <begin position="451"/>
        <end position="454"/>
    </location>
</feature>
<feature type="turn" evidence="5">
    <location>
        <begin position="455"/>
        <end position="457"/>
    </location>
</feature>
<feature type="helix" evidence="5">
    <location>
        <begin position="458"/>
        <end position="460"/>
    </location>
</feature>
<feature type="helix" evidence="5">
    <location>
        <begin position="461"/>
        <end position="466"/>
    </location>
</feature>
<feature type="strand" evidence="5">
    <location>
        <begin position="472"/>
        <end position="477"/>
    </location>
</feature>
<feature type="helix" evidence="5">
    <location>
        <begin position="482"/>
        <end position="492"/>
    </location>
</feature>
<feature type="helix" evidence="5">
    <location>
        <begin position="505"/>
        <end position="511"/>
    </location>
</feature>
<feature type="strand" evidence="5">
    <location>
        <begin position="515"/>
        <end position="518"/>
    </location>
</feature>
<feature type="turn" evidence="5">
    <location>
        <begin position="520"/>
        <end position="522"/>
    </location>
</feature>
<feature type="helix" evidence="5">
    <location>
        <begin position="525"/>
        <end position="535"/>
    </location>
</feature>
<feature type="strand" evidence="5">
    <location>
        <begin position="539"/>
        <end position="545"/>
    </location>
</feature>
<feature type="strand" evidence="5">
    <location>
        <begin position="547"/>
        <end position="550"/>
    </location>
</feature>
<feature type="turn" evidence="5">
    <location>
        <begin position="551"/>
        <end position="553"/>
    </location>
</feature>
<feature type="helix" evidence="5">
    <location>
        <begin position="582"/>
        <end position="586"/>
    </location>
</feature>
<protein>
    <recommendedName>
        <fullName>Cyclohexane-1,2-dione hydrolase</fullName>
        <ecNumber>3.7.1.11</ecNumber>
    </recommendedName>
</protein>
<organism>
    <name type="scientific">Azoarcus sp</name>
    <dbReference type="NCBI Taxonomy" id="29544"/>
    <lineage>
        <taxon>Bacteria</taxon>
        <taxon>Pseudomonadati</taxon>
        <taxon>Pseudomonadota</taxon>
        <taxon>Betaproteobacteria</taxon>
        <taxon>Rhodocyclales</taxon>
        <taxon>Zoogloeaceae</taxon>
        <taxon>Azoarcus</taxon>
    </lineage>
</organism>
<dbReference type="EC" id="3.7.1.11"/>
<dbReference type="PDB" id="2PGN">
    <property type="method" value="X-ray"/>
    <property type="resolution" value="1.20 A"/>
    <property type="chains" value="A/B=1-589"/>
</dbReference>
<dbReference type="PDB" id="2PGO">
    <property type="method" value="X-ray"/>
    <property type="resolution" value="1.26 A"/>
    <property type="chains" value="A/B=1-589"/>
</dbReference>
<dbReference type="PDB" id="4D5E">
    <property type="method" value="X-ray"/>
    <property type="resolution" value="1.43 A"/>
    <property type="chains" value="A/B=1-589"/>
</dbReference>
<dbReference type="PDB" id="4D5G">
    <property type="method" value="X-ray"/>
    <property type="resolution" value="2.00 A"/>
    <property type="chains" value="A/B=1-589"/>
</dbReference>
<dbReference type="PDBsum" id="2PGN"/>
<dbReference type="PDBsum" id="2PGO"/>
<dbReference type="PDBsum" id="4D5E"/>
<dbReference type="PDBsum" id="4D5G"/>
<dbReference type="SMR" id="P0CH62"/>
<dbReference type="MINT" id="P0CH62"/>
<dbReference type="BRENDA" id="3.7.1.11">
    <property type="organism ID" value="604"/>
</dbReference>
<dbReference type="EvolutionaryTrace" id="P0CH62"/>
<dbReference type="GO" id="GO:0005948">
    <property type="term" value="C:acetolactate synthase complex"/>
    <property type="evidence" value="ECO:0007669"/>
    <property type="project" value="TreeGrafter"/>
</dbReference>
<dbReference type="GO" id="GO:0003984">
    <property type="term" value="F:acetolactate synthase activity"/>
    <property type="evidence" value="ECO:0007669"/>
    <property type="project" value="TreeGrafter"/>
</dbReference>
<dbReference type="GO" id="GO:0050660">
    <property type="term" value="F:flavin adenine dinucleotide binding"/>
    <property type="evidence" value="ECO:0007669"/>
    <property type="project" value="TreeGrafter"/>
</dbReference>
<dbReference type="GO" id="GO:0016787">
    <property type="term" value="F:hydrolase activity"/>
    <property type="evidence" value="ECO:0007669"/>
    <property type="project" value="UniProtKB-KW"/>
</dbReference>
<dbReference type="GO" id="GO:0000287">
    <property type="term" value="F:magnesium ion binding"/>
    <property type="evidence" value="ECO:0007669"/>
    <property type="project" value="InterPro"/>
</dbReference>
<dbReference type="GO" id="GO:0030976">
    <property type="term" value="F:thiamine pyrophosphate binding"/>
    <property type="evidence" value="ECO:0007669"/>
    <property type="project" value="InterPro"/>
</dbReference>
<dbReference type="GO" id="GO:0009097">
    <property type="term" value="P:isoleucine biosynthetic process"/>
    <property type="evidence" value="ECO:0007669"/>
    <property type="project" value="TreeGrafter"/>
</dbReference>
<dbReference type="GO" id="GO:0009099">
    <property type="term" value="P:L-valine biosynthetic process"/>
    <property type="evidence" value="ECO:0007669"/>
    <property type="project" value="TreeGrafter"/>
</dbReference>
<dbReference type="CDD" id="cd00568">
    <property type="entry name" value="TPP_enzymes"/>
    <property type="match status" value="1"/>
</dbReference>
<dbReference type="CDD" id="cd07035">
    <property type="entry name" value="TPP_PYR_POX_like"/>
    <property type="match status" value="1"/>
</dbReference>
<dbReference type="Gene3D" id="3.40.50.970">
    <property type="match status" value="2"/>
</dbReference>
<dbReference type="Gene3D" id="3.40.50.1220">
    <property type="entry name" value="TPP-binding domain"/>
    <property type="match status" value="1"/>
</dbReference>
<dbReference type="InterPro" id="IPR029035">
    <property type="entry name" value="DHS-like_NAD/FAD-binding_dom"/>
</dbReference>
<dbReference type="InterPro" id="IPR029061">
    <property type="entry name" value="THDP-binding"/>
</dbReference>
<dbReference type="InterPro" id="IPR012000">
    <property type="entry name" value="Thiamin_PyroP_enz_cen_dom"/>
</dbReference>
<dbReference type="InterPro" id="IPR012001">
    <property type="entry name" value="Thiamin_PyroP_enz_TPP-bd_dom"/>
</dbReference>
<dbReference type="InterPro" id="IPR045229">
    <property type="entry name" value="TPP_enz"/>
</dbReference>
<dbReference type="InterPro" id="IPR011766">
    <property type="entry name" value="TPP_enzyme_TPP-bd"/>
</dbReference>
<dbReference type="PANTHER" id="PTHR18968:SF167">
    <property type="entry name" value="ACETOLACTATE SYNTHASE LARGE SUBUNIT ILVB2-RELATED"/>
    <property type="match status" value="1"/>
</dbReference>
<dbReference type="PANTHER" id="PTHR18968">
    <property type="entry name" value="THIAMINE PYROPHOSPHATE ENZYMES"/>
    <property type="match status" value="1"/>
</dbReference>
<dbReference type="Pfam" id="PF02775">
    <property type="entry name" value="TPP_enzyme_C"/>
    <property type="match status" value="1"/>
</dbReference>
<dbReference type="Pfam" id="PF00205">
    <property type="entry name" value="TPP_enzyme_M"/>
    <property type="match status" value="1"/>
</dbReference>
<dbReference type="Pfam" id="PF02776">
    <property type="entry name" value="TPP_enzyme_N"/>
    <property type="match status" value="1"/>
</dbReference>
<dbReference type="SUPFAM" id="SSF52467">
    <property type="entry name" value="DHS-like NAD/FAD-binding domain"/>
    <property type="match status" value="1"/>
</dbReference>
<dbReference type="SUPFAM" id="SSF52518">
    <property type="entry name" value="Thiamin diphosphate-binding fold (THDP-binding)"/>
    <property type="match status" value="2"/>
</dbReference>
<keyword id="KW-0002">3D-structure</keyword>
<keyword id="KW-0274">FAD</keyword>
<keyword id="KW-0285">Flavoprotein</keyword>
<keyword id="KW-0378">Hydrolase</keyword>
<keyword id="KW-0460">Magnesium</keyword>
<keyword id="KW-0479">Metal-binding</keyword>
<keyword id="KW-0786">Thiamine pyrophosphate</keyword>
<evidence type="ECO:0000250" key="1"/>
<evidence type="ECO:0000269" key="2">
    <source ref="1"/>
</evidence>
<evidence type="ECO:0000269" key="3">
    <source ref="2"/>
</evidence>
<evidence type="ECO:0000305" key="4"/>
<evidence type="ECO:0007829" key="5">
    <source>
        <dbReference type="PDB" id="4D5E"/>
    </source>
</evidence>
<name>CHDH_AZOSP</name>
<proteinExistence type="evidence at protein level"/>